<name>DXS1_ORYSJ</name>
<comment type="function">
    <text evidence="1">Catalyzes the acyloin condensation reaction between C atoms 2 and 3 of pyruvate and glyceraldehyde 3-phosphate to yield 1-deoxy-D-xylulose-5-phosphate (DXP). Is a limiting enzyme for plastidic isoprenoid biosynthesis and essential for chloroplast development (By similarity).</text>
</comment>
<comment type="catalytic activity">
    <reaction>
        <text>D-glyceraldehyde 3-phosphate + pyruvate + H(+) = 1-deoxy-D-xylulose 5-phosphate + CO2</text>
        <dbReference type="Rhea" id="RHEA:12605"/>
        <dbReference type="ChEBI" id="CHEBI:15361"/>
        <dbReference type="ChEBI" id="CHEBI:15378"/>
        <dbReference type="ChEBI" id="CHEBI:16526"/>
        <dbReference type="ChEBI" id="CHEBI:57792"/>
        <dbReference type="ChEBI" id="CHEBI:59776"/>
        <dbReference type="EC" id="2.2.1.7"/>
    </reaction>
</comment>
<comment type="cofactor">
    <cofactor evidence="1">
        <name>Mg(2+)</name>
        <dbReference type="ChEBI" id="CHEBI:18420"/>
    </cofactor>
    <text evidence="1">Binds 1 Mg(2+) ion per subunit.</text>
</comment>
<comment type="cofactor">
    <cofactor evidence="1">
        <name>thiamine diphosphate</name>
        <dbReference type="ChEBI" id="CHEBI:58937"/>
    </cofactor>
    <text evidence="1">Binds 1 thiamine pyrophosphate per subunit.</text>
</comment>
<comment type="pathway">
    <text>Metabolic intermediate biosynthesis; 1-deoxy-D-xylulose 5-phosphate biosynthesis; 1-deoxy-D-xylulose 5-phosphate from D-glyceraldehyde 3-phosphate and pyruvate: step 1/1.</text>
</comment>
<comment type="subunit">
    <text evidence="1">Homodimer.</text>
</comment>
<comment type="subcellular location">
    <subcellularLocation>
        <location evidence="1">Plastid</location>
        <location evidence="1">Chloroplast stroma</location>
    </subcellularLocation>
</comment>
<comment type="alternative products">
    <event type="alternative splicing"/>
    <isoform>
        <id>O22567-1</id>
        <name>1</name>
        <sequence type="displayed"/>
    </isoform>
    <isoform>
        <id>O22567-2</id>
        <name>2</name>
        <sequence type="described" ref="VSP_017655 VSP_017656"/>
    </isoform>
</comment>
<comment type="induction">
    <text>By the mycorrhizal fungus G.intraradices colonization in roots.</text>
</comment>
<comment type="similarity">
    <text evidence="5">Belongs to the transketolase family. DXPS subfamily.</text>
</comment>
<comment type="sequence caution" evidence="5">
    <conflict type="erroneous gene model prediction">
        <sequence resource="EMBL-CDS" id="AAV59446"/>
    </conflict>
</comment>
<gene>
    <name type="primary">CLA1</name>
    <name type="ordered locus">Os05g0408900</name>
    <name type="ordered locus">LOC_Os05g33840</name>
    <name type="ORF">OSJNBb0014K18.8</name>
    <name type="ORF">P0040B10.17</name>
</gene>
<proteinExistence type="evidence at transcript level"/>
<reference key="1">
    <citation type="journal article" date="2005" name="Mol. Genet. Genomics">
        <title>A fine physical map of the rice chromosome 5.</title>
        <authorList>
            <person name="Cheng C.-H."/>
            <person name="Chung M.C."/>
            <person name="Liu S.-M."/>
            <person name="Chen S.-K."/>
            <person name="Kao F.Y."/>
            <person name="Lin S.-J."/>
            <person name="Hsiao S.-H."/>
            <person name="Tseng I.C."/>
            <person name="Hsing Y.-I.C."/>
            <person name="Wu H.-P."/>
            <person name="Chen C.-S."/>
            <person name="Shaw J.-F."/>
            <person name="Wu J."/>
            <person name="Matsumoto T."/>
            <person name="Sasaki T."/>
            <person name="Chen H.-C."/>
            <person name="Chow T.-Y."/>
        </authorList>
    </citation>
    <scope>NUCLEOTIDE SEQUENCE [LARGE SCALE GENOMIC DNA]</scope>
    <source>
        <strain>cv. Nipponbare</strain>
    </source>
</reference>
<reference key="2">
    <citation type="journal article" date="2005" name="Nature">
        <title>The map-based sequence of the rice genome.</title>
        <authorList>
            <consortium name="International rice genome sequencing project (IRGSP)"/>
        </authorList>
    </citation>
    <scope>NUCLEOTIDE SEQUENCE [LARGE SCALE GENOMIC DNA]</scope>
    <source>
        <strain>cv. Nipponbare</strain>
    </source>
</reference>
<reference key="3">
    <citation type="journal article" date="2008" name="Nucleic Acids Res.">
        <title>The rice annotation project database (RAP-DB): 2008 update.</title>
        <authorList>
            <consortium name="The rice annotation project (RAP)"/>
        </authorList>
    </citation>
    <scope>GENOME REANNOTATION</scope>
    <source>
        <strain>cv. Nipponbare</strain>
    </source>
</reference>
<reference key="4">
    <citation type="journal article" date="2013" name="Rice">
        <title>Improvement of the Oryza sativa Nipponbare reference genome using next generation sequence and optical map data.</title>
        <authorList>
            <person name="Kawahara Y."/>
            <person name="de la Bastide M."/>
            <person name="Hamilton J.P."/>
            <person name="Kanamori H."/>
            <person name="McCombie W.R."/>
            <person name="Ouyang S."/>
            <person name="Schwartz D.C."/>
            <person name="Tanaka T."/>
            <person name="Wu J."/>
            <person name="Zhou S."/>
            <person name="Childs K.L."/>
            <person name="Davidson R.M."/>
            <person name="Lin H."/>
            <person name="Quesada-Ocampo L."/>
            <person name="Vaillancourt B."/>
            <person name="Sakai H."/>
            <person name="Lee S.S."/>
            <person name="Kim J."/>
            <person name="Numa H."/>
            <person name="Itoh T."/>
            <person name="Buell C.R."/>
            <person name="Matsumoto T."/>
        </authorList>
    </citation>
    <scope>GENOME REANNOTATION</scope>
    <source>
        <strain>cv. Nipponbare</strain>
    </source>
</reference>
<reference key="5">
    <citation type="journal article" date="2005" name="PLoS Biol.">
        <title>The genomes of Oryza sativa: a history of duplications.</title>
        <authorList>
            <person name="Yu J."/>
            <person name="Wang J."/>
            <person name="Lin W."/>
            <person name="Li S."/>
            <person name="Li H."/>
            <person name="Zhou J."/>
            <person name="Ni P."/>
            <person name="Dong W."/>
            <person name="Hu S."/>
            <person name="Zeng C."/>
            <person name="Zhang J."/>
            <person name="Zhang Y."/>
            <person name="Li R."/>
            <person name="Xu Z."/>
            <person name="Li S."/>
            <person name="Li X."/>
            <person name="Zheng H."/>
            <person name="Cong L."/>
            <person name="Lin L."/>
            <person name="Yin J."/>
            <person name="Geng J."/>
            <person name="Li G."/>
            <person name="Shi J."/>
            <person name="Liu J."/>
            <person name="Lv H."/>
            <person name="Li J."/>
            <person name="Wang J."/>
            <person name="Deng Y."/>
            <person name="Ran L."/>
            <person name="Shi X."/>
            <person name="Wang X."/>
            <person name="Wu Q."/>
            <person name="Li C."/>
            <person name="Ren X."/>
            <person name="Wang J."/>
            <person name="Wang X."/>
            <person name="Li D."/>
            <person name="Liu D."/>
            <person name="Zhang X."/>
            <person name="Ji Z."/>
            <person name="Zhao W."/>
            <person name="Sun Y."/>
            <person name="Zhang Z."/>
            <person name="Bao J."/>
            <person name="Han Y."/>
            <person name="Dong L."/>
            <person name="Ji J."/>
            <person name="Chen P."/>
            <person name="Wu S."/>
            <person name="Liu J."/>
            <person name="Xiao Y."/>
            <person name="Bu D."/>
            <person name="Tan J."/>
            <person name="Yang L."/>
            <person name="Ye C."/>
            <person name="Zhang J."/>
            <person name="Xu J."/>
            <person name="Zhou Y."/>
            <person name="Yu Y."/>
            <person name="Zhang B."/>
            <person name="Zhuang S."/>
            <person name="Wei H."/>
            <person name="Liu B."/>
            <person name="Lei M."/>
            <person name="Yu H."/>
            <person name="Li Y."/>
            <person name="Xu H."/>
            <person name="Wei S."/>
            <person name="He X."/>
            <person name="Fang L."/>
            <person name="Zhang Z."/>
            <person name="Zhang Y."/>
            <person name="Huang X."/>
            <person name="Su Z."/>
            <person name="Tong W."/>
            <person name="Li J."/>
            <person name="Tong Z."/>
            <person name="Li S."/>
            <person name="Ye J."/>
            <person name="Wang L."/>
            <person name="Fang L."/>
            <person name="Lei T."/>
            <person name="Chen C.-S."/>
            <person name="Chen H.-C."/>
            <person name="Xu Z."/>
            <person name="Li H."/>
            <person name="Huang H."/>
            <person name="Zhang F."/>
            <person name="Xu H."/>
            <person name="Li N."/>
            <person name="Zhao C."/>
            <person name="Li S."/>
            <person name="Dong L."/>
            <person name="Huang Y."/>
            <person name="Li L."/>
            <person name="Xi Y."/>
            <person name="Qi Q."/>
            <person name="Li W."/>
            <person name="Zhang B."/>
            <person name="Hu W."/>
            <person name="Zhang Y."/>
            <person name="Tian X."/>
            <person name="Jiao Y."/>
            <person name="Liang X."/>
            <person name="Jin J."/>
            <person name="Gao L."/>
            <person name="Zheng W."/>
            <person name="Hao B."/>
            <person name="Liu S.-M."/>
            <person name="Wang W."/>
            <person name="Yuan L."/>
            <person name="Cao M."/>
            <person name="McDermott J."/>
            <person name="Samudrala R."/>
            <person name="Wang J."/>
            <person name="Wong G.K.-S."/>
            <person name="Yang H."/>
        </authorList>
    </citation>
    <scope>NUCLEOTIDE SEQUENCE [LARGE SCALE GENOMIC DNA]</scope>
    <source>
        <strain>cv. Nipponbare</strain>
    </source>
</reference>
<reference key="6">
    <citation type="journal article" date="2003" name="Science">
        <title>Collection, mapping, and annotation of over 28,000 cDNA clones from japonica rice.</title>
        <authorList>
            <consortium name="The rice full-length cDNA consortium"/>
        </authorList>
    </citation>
    <scope>NUCLEOTIDE SEQUENCE [LARGE SCALE MRNA] (ISOFORMS 1 AND 2)</scope>
    <source>
        <strain>cv. Nipponbare</strain>
    </source>
</reference>
<reference key="7">
    <citation type="online journal article" date="1997" name="Plant Gene Register">
        <title>Nucleotide sequence of a rice cDNA encoding a transketolase-like protein homologous to the Arabidopsis CLA1 gene product.</title>
        <authorList>
            <person name="Campos N."/>
            <person name="Lois L.M."/>
            <person name="Boronat A."/>
        </authorList>
        <locator>PGR97-169</locator>
    </citation>
    <scope>NUCLEOTIDE SEQUENCE [MRNA] OF 77-670 (ISOFORM 1)</scope>
    <source>
        <tissue>Shoot</tissue>
    </source>
</reference>
<organism>
    <name type="scientific">Oryza sativa subsp. japonica</name>
    <name type="common">Rice</name>
    <dbReference type="NCBI Taxonomy" id="39947"/>
    <lineage>
        <taxon>Eukaryota</taxon>
        <taxon>Viridiplantae</taxon>
        <taxon>Streptophyta</taxon>
        <taxon>Embryophyta</taxon>
        <taxon>Tracheophyta</taxon>
        <taxon>Spermatophyta</taxon>
        <taxon>Magnoliopsida</taxon>
        <taxon>Liliopsida</taxon>
        <taxon>Poales</taxon>
        <taxon>Poaceae</taxon>
        <taxon>BOP clade</taxon>
        <taxon>Oryzoideae</taxon>
        <taxon>Oryzeae</taxon>
        <taxon>Oryzinae</taxon>
        <taxon>Oryza</taxon>
        <taxon>Oryza sativa</taxon>
    </lineage>
</organism>
<protein>
    <recommendedName>
        <fullName>1-deoxy-D-xylulose-5-phosphate synthase 1, chloroplastic</fullName>
        <shortName>1-deoxyxylulose-5-phosphate synthase</shortName>
        <shortName>DXP synthase</shortName>
        <shortName>DXPS</shortName>
        <ecNumber>2.2.1.7</ecNumber>
    </recommendedName>
</protein>
<evidence type="ECO:0000250" key="1"/>
<evidence type="ECO:0000255" key="2"/>
<evidence type="ECO:0000256" key="3">
    <source>
        <dbReference type="SAM" id="MobiDB-lite"/>
    </source>
</evidence>
<evidence type="ECO:0000303" key="4">
    <source>
    </source>
</evidence>
<evidence type="ECO:0000305" key="5"/>
<dbReference type="EC" id="2.2.1.7"/>
<dbReference type="EMBL" id="AC137620">
    <property type="protein sequence ID" value="AAT58851.1"/>
    <property type="molecule type" value="Genomic_DNA"/>
</dbReference>
<dbReference type="EMBL" id="AC137928">
    <property type="protein sequence ID" value="AAV59446.1"/>
    <property type="status" value="ALT_SEQ"/>
    <property type="molecule type" value="Genomic_DNA"/>
</dbReference>
<dbReference type="EMBL" id="AP008211">
    <property type="protein sequence ID" value="BAF17438.1"/>
    <property type="molecule type" value="Genomic_DNA"/>
</dbReference>
<dbReference type="EMBL" id="AP014961">
    <property type="protein sequence ID" value="BAS93978.1"/>
    <property type="molecule type" value="Genomic_DNA"/>
</dbReference>
<dbReference type="EMBL" id="AP014961">
    <property type="protein sequence ID" value="BAS93980.1"/>
    <property type="molecule type" value="Genomic_DNA"/>
</dbReference>
<dbReference type="EMBL" id="CM000142">
    <property type="protein sequence ID" value="EEE63700.1"/>
    <property type="molecule type" value="Genomic_DNA"/>
</dbReference>
<dbReference type="EMBL" id="AK064944">
    <property type="protein sequence ID" value="BAG89290.1"/>
    <property type="molecule type" value="mRNA"/>
</dbReference>
<dbReference type="EMBL" id="AK104851">
    <property type="protein sequence ID" value="BAG96994.1"/>
    <property type="molecule type" value="mRNA"/>
</dbReference>
<dbReference type="EMBL" id="AK106750">
    <property type="status" value="NOT_ANNOTATED_CDS"/>
    <property type="molecule type" value="mRNA"/>
</dbReference>
<dbReference type="EMBL" id="AF024512">
    <property type="protein sequence ID" value="AAB88295.1"/>
    <property type="molecule type" value="mRNA"/>
</dbReference>
<dbReference type="PIR" id="T02208">
    <property type="entry name" value="T02208"/>
</dbReference>
<dbReference type="RefSeq" id="XP_015640505.1">
    <property type="nucleotide sequence ID" value="XM_015785019.1"/>
</dbReference>
<dbReference type="SMR" id="O22567"/>
<dbReference type="FunCoup" id="O22567">
    <property type="interactions" value="433"/>
</dbReference>
<dbReference type="STRING" id="39947.O22567"/>
<dbReference type="PaxDb" id="39947-O22567"/>
<dbReference type="EnsemblPlants" id="Os05t0408900-03">
    <molecule id="O22567-1"/>
    <property type="protein sequence ID" value="Os05t0408900-03"/>
    <property type="gene ID" value="Os05g0408900"/>
</dbReference>
<dbReference type="EnsemblPlants" id="Os05t0408900-04">
    <molecule id="O22567-1"/>
    <property type="protein sequence ID" value="Os05t0408900-04"/>
    <property type="gene ID" value="Os05g0408900"/>
</dbReference>
<dbReference type="Gramene" id="Os05t0408900-03">
    <molecule id="O22567-1"/>
    <property type="protein sequence ID" value="Os05t0408900-03"/>
    <property type="gene ID" value="Os05g0408900"/>
</dbReference>
<dbReference type="Gramene" id="Os05t0408900-04">
    <molecule id="O22567-1"/>
    <property type="protein sequence ID" value="Os05t0408900-04"/>
    <property type="gene ID" value="Os05g0408900"/>
</dbReference>
<dbReference type="KEGG" id="dosa:Os05g0408900"/>
<dbReference type="eggNOG" id="KOG0523">
    <property type="taxonomic scope" value="Eukaryota"/>
</dbReference>
<dbReference type="HOGENOM" id="CLU_009227_1_4_1"/>
<dbReference type="InParanoid" id="O22567"/>
<dbReference type="OMA" id="QVGYHAQ"/>
<dbReference type="OrthoDB" id="10266385at2759"/>
<dbReference type="PlantReactome" id="R-OSA-1119464">
    <property type="pathway name" value="Methylerythritol phosphate pathway"/>
</dbReference>
<dbReference type="PlantReactome" id="R-OSA-1119594">
    <property type="pathway name" value="Pyridoxal 5'-phosphate biosynthesis"/>
</dbReference>
<dbReference type="PlantReactome" id="R-OSA-1119629">
    <property type="pathway name" value="Thiamine biosynthesis"/>
</dbReference>
<dbReference type="UniPathway" id="UPA00064">
    <property type="reaction ID" value="UER00091"/>
</dbReference>
<dbReference type="Proteomes" id="UP000000763">
    <property type="component" value="Chromosome 5"/>
</dbReference>
<dbReference type="Proteomes" id="UP000007752">
    <property type="component" value="Chromosome 5"/>
</dbReference>
<dbReference type="Proteomes" id="UP000059680">
    <property type="component" value="Chromosome 5"/>
</dbReference>
<dbReference type="GO" id="GO:0009507">
    <property type="term" value="C:chloroplast"/>
    <property type="evidence" value="ECO:0000318"/>
    <property type="project" value="GO_Central"/>
</dbReference>
<dbReference type="GO" id="GO:0009570">
    <property type="term" value="C:chloroplast stroma"/>
    <property type="evidence" value="ECO:0007669"/>
    <property type="project" value="UniProtKB-SubCell"/>
</dbReference>
<dbReference type="GO" id="GO:0008661">
    <property type="term" value="F:1-deoxy-D-xylulose-5-phosphate synthase activity"/>
    <property type="evidence" value="ECO:0007669"/>
    <property type="project" value="UniProtKB-EC"/>
</dbReference>
<dbReference type="GO" id="GO:0046872">
    <property type="term" value="F:metal ion binding"/>
    <property type="evidence" value="ECO:0007669"/>
    <property type="project" value="UniProtKB-KW"/>
</dbReference>
<dbReference type="GO" id="GO:0016744">
    <property type="term" value="F:transketolase or transaldolase activity"/>
    <property type="evidence" value="ECO:0000318"/>
    <property type="project" value="GO_Central"/>
</dbReference>
<dbReference type="GO" id="GO:0052865">
    <property type="term" value="P:1-deoxy-D-xylulose 5-phosphate biosynthetic process"/>
    <property type="evidence" value="ECO:0007669"/>
    <property type="project" value="UniProtKB-UniPathway"/>
</dbReference>
<dbReference type="GO" id="GO:0015995">
    <property type="term" value="P:chlorophyll biosynthetic process"/>
    <property type="evidence" value="ECO:0000318"/>
    <property type="project" value="GO_Central"/>
</dbReference>
<dbReference type="GO" id="GO:0019682">
    <property type="term" value="P:glyceraldehyde-3-phosphate metabolic process"/>
    <property type="evidence" value="ECO:0007669"/>
    <property type="project" value="UniProtKB-ARBA"/>
</dbReference>
<dbReference type="GO" id="GO:0016114">
    <property type="term" value="P:terpenoid biosynthetic process"/>
    <property type="evidence" value="ECO:0007669"/>
    <property type="project" value="InterPro"/>
</dbReference>
<dbReference type="GO" id="GO:0009228">
    <property type="term" value="P:thiamine biosynthetic process"/>
    <property type="evidence" value="ECO:0007669"/>
    <property type="project" value="UniProtKB-KW"/>
</dbReference>
<dbReference type="CDD" id="cd02007">
    <property type="entry name" value="TPP_DXS"/>
    <property type="match status" value="1"/>
</dbReference>
<dbReference type="CDD" id="cd07033">
    <property type="entry name" value="TPP_PYR_DXS_TK_like"/>
    <property type="match status" value="1"/>
</dbReference>
<dbReference type="FunFam" id="3.40.50.920:FF:000002">
    <property type="entry name" value="1-deoxy-D-xylulose-5-phosphate synthase"/>
    <property type="match status" value="1"/>
</dbReference>
<dbReference type="FunFam" id="3.40.50.970:FF:000005">
    <property type="entry name" value="1-deoxy-D-xylulose-5-phosphate synthase"/>
    <property type="match status" value="1"/>
</dbReference>
<dbReference type="Gene3D" id="3.40.50.920">
    <property type="match status" value="1"/>
</dbReference>
<dbReference type="Gene3D" id="3.40.50.970">
    <property type="match status" value="2"/>
</dbReference>
<dbReference type="HAMAP" id="MF_00315">
    <property type="entry name" value="DXP_synth"/>
    <property type="match status" value="1"/>
</dbReference>
<dbReference type="InterPro" id="IPR005477">
    <property type="entry name" value="Dxylulose-5-P_synthase"/>
</dbReference>
<dbReference type="InterPro" id="IPR029061">
    <property type="entry name" value="THDP-binding"/>
</dbReference>
<dbReference type="InterPro" id="IPR009014">
    <property type="entry name" value="Transketo_C/PFOR_II"/>
</dbReference>
<dbReference type="InterPro" id="IPR005475">
    <property type="entry name" value="Transketolase-like_Pyr-bd"/>
</dbReference>
<dbReference type="InterPro" id="IPR020826">
    <property type="entry name" value="Transketolase_BS"/>
</dbReference>
<dbReference type="InterPro" id="IPR033248">
    <property type="entry name" value="Transketolase_C"/>
</dbReference>
<dbReference type="InterPro" id="IPR049557">
    <property type="entry name" value="Transketolase_CS"/>
</dbReference>
<dbReference type="NCBIfam" id="TIGR00204">
    <property type="entry name" value="dxs"/>
    <property type="match status" value="1"/>
</dbReference>
<dbReference type="NCBIfam" id="NF003933">
    <property type="entry name" value="PRK05444.2-2"/>
    <property type="match status" value="1"/>
</dbReference>
<dbReference type="PANTHER" id="PTHR43322">
    <property type="entry name" value="1-D-DEOXYXYLULOSE 5-PHOSPHATE SYNTHASE-RELATED"/>
    <property type="match status" value="1"/>
</dbReference>
<dbReference type="PANTHER" id="PTHR43322:SF5">
    <property type="entry name" value="1-DEOXY-D-XYLULOSE-5-PHOSPHATE SYNTHASE, CHLOROPLASTIC"/>
    <property type="match status" value="1"/>
</dbReference>
<dbReference type="Pfam" id="PF13292">
    <property type="entry name" value="DXP_synthase_N"/>
    <property type="match status" value="1"/>
</dbReference>
<dbReference type="Pfam" id="PF02779">
    <property type="entry name" value="Transket_pyr"/>
    <property type="match status" value="1"/>
</dbReference>
<dbReference type="Pfam" id="PF02780">
    <property type="entry name" value="Transketolase_C"/>
    <property type="match status" value="1"/>
</dbReference>
<dbReference type="SMART" id="SM00861">
    <property type="entry name" value="Transket_pyr"/>
    <property type="match status" value="1"/>
</dbReference>
<dbReference type="SUPFAM" id="SSF52518">
    <property type="entry name" value="Thiamin diphosphate-binding fold (THDP-binding)"/>
    <property type="match status" value="2"/>
</dbReference>
<dbReference type="SUPFAM" id="SSF52922">
    <property type="entry name" value="TK C-terminal domain-like"/>
    <property type="match status" value="1"/>
</dbReference>
<dbReference type="PROSITE" id="PS00801">
    <property type="entry name" value="TRANSKETOLASE_1"/>
    <property type="match status" value="1"/>
</dbReference>
<dbReference type="PROSITE" id="PS00802">
    <property type="entry name" value="TRANSKETOLASE_2"/>
    <property type="match status" value="1"/>
</dbReference>
<keyword id="KW-0025">Alternative splicing</keyword>
<keyword id="KW-0150">Chloroplast</keyword>
<keyword id="KW-0414">Isoprene biosynthesis</keyword>
<keyword id="KW-0460">Magnesium</keyword>
<keyword id="KW-0479">Metal-binding</keyword>
<keyword id="KW-0934">Plastid</keyword>
<keyword id="KW-1185">Reference proteome</keyword>
<keyword id="KW-0784">Thiamine biosynthesis</keyword>
<keyword id="KW-0786">Thiamine pyrophosphate</keyword>
<keyword id="KW-0808">Transferase</keyword>
<keyword id="KW-0809">Transit peptide</keyword>
<feature type="transit peptide" description="Chloroplast" evidence="2">
    <location>
        <begin position="1"/>
        <end position="51"/>
    </location>
</feature>
<feature type="chain" id="PRO_0000189180" description="1-deoxy-D-xylulose-5-phosphate synthase 1, chloroplastic">
    <location>
        <begin position="52"/>
        <end position="720"/>
    </location>
</feature>
<feature type="region of interest" description="Disordered" evidence="3">
    <location>
        <begin position="35"/>
        <end position="74"/>
    </location>
</feature>
<feature type="compositionally biased region" description="Basic residues" evidence="3">
    <location>
        <begin position="35"/>
        <end position="46"/>
    </location>
</feature>
<feature type="compositionally biased region" description="Basic and acidic residues" evidence="3">
    <location>
        <begin position="56"/>
        <end position="65"/>
    </location>
</feature>
<feature type="binding site" evidence="1">
    <location>
        <position position="142"/>
    </location>
    <ligand>
        <name>thiamine diphosphate</name>
        <dbReference type="ChEBI" id="CHEBI:58937"/>
    </ligand>
</feature>
<feature type="binding site" evidence="1">
    <location>
        <begin position="183"/>
        <end position="185"/>
    </location>
    <ligand>
        <name>thiamine diphosphate</name>
        <dbReference type="ChEBI" id="CHEBI:58937"/>
    </ligand>
</feature>
<feature type="binding site" evidence="1">
    <location>
        <position position="214"/>
    </location>
    <ligand>
        <name>Mg(2+)</name>
        <dbReference type="ChEBI" id="CHEBI:18420"/>
    </ligand>
</feature>
<feature type="binding site" evidence="1">
    <location>
        <begin position="215"/>
        <end position="216"/>
    </location>
    <ligand>
        <name>thiamine diphosphate</name>
        <dbReference type="ChEBI" id="CHEBI:58937"/>
    </ligand>
</feature>
<feature type="binding site" evidence="1">
    <location>
        <position position="243"/>
    </location>
    <ligand>
        <name>Mg(2+)</name>
        <dbReference type="ChEBI" id="CHEBI:18420"/>
    </ligand>
</feature>
<feature type="binding site" evidence="1">
    <location>
        <position position="243"/>
    </location>
    <ligand>
        <name>thiamine diphosphate</name>
        <dbReference type="ChEBI" id="CHEBI:58937"/>
    </ligand>
</feature>
<feature type="binding site" evidence="1">
    <location>
        <position position="364"/>
    </location>
    <ligand>
        <name>thiamine diphosphate</name>
        <dbReference type="ChEBI" id="CHEBI:58937"/>
    </ligand>
</feature>
<feature type="binding site" evidence="1">
    <location>
        <position position="446"/>
    </location>
    <ligand>
        <name>thiamine diphosphate</name>
        <dbReference type="ChEBI" id="CHEBI:58937"/>
    </ligand>
</feature>
<feature type="splice variant" id="VSP_017655" description="In isoform 2." evidence="4">
    <original>GVTKQIGGSVHELAAKVDEYA</original>
    <variation>VRPHKRSTLTLDCPLPRKARE</variation>
    <location>
        <begin position="285"/>
        <end position="305"/>
    </location>
</feature>
<feature type="splice variant" id="VSP_017656" description="In isoform 2." evidence="4">
    <location>
        <begin position="306"/>
        <end position="720"/>
    </location>
</feature>
<accession>O22567</accession>
<accession>A0A0P0WM75</accession>
<accession>Q0DI85</accession>
<accession>Q5TKB6</accession>
<accession>Q6I573</accession>
<sequence length="720" mass="77304">MALTTFSISRGGFVGALPQEGHFAPAAAELSLHKLQSRPHKARRRSSSSISASLSTEREAAEYHSQRPPTPLLDTVNYPIHMKNLSLKELQQLADELRSDVIFHVSKTGGHLGSSLGVVELTVALHYVFNTPQDKILWDVGHQSYPHKILTGRRDKMPTMRQTNGLSGFTKRSESEYDSFGTGHSSTTISAALGMAVGRDLKGGKNNVVAVIGDGAMTAGQAYEAMNNAGYLDSDMIVILNDNKQVSLPTATLDGPAPPVGALSSALSKLQSSRPLRELREVAKGVTKQIGGSVHELAAKVDEYARGMISGSGSTLFEELGLYYIGPVDGHNIDDLITILREVKSTKTTGPVLIHVVTEKGRGYPYAERAADKYHGVAKFDPATGKQFKSPAKTLSYTNYFAEALIAEAEQDNRVVAIHAAMGGGTGLNYFLRRFPNRCFDVGIAEQHAVTFAAGLACEGLKPFCAIYSSFLQRGYDQVVHDVDLQKLPVRFAMDRAGLVGADGPTHCGAFDVTYMACLPNMVVMAPSDEAELCHMVATAAAIDDRPSCFRYPRGNGIGVPLPPNYKGVPLEVGKGRVLLEGERVALLGYGSAVQYCLAAASLVERHGLKVTVADARFCKPLDQTLIRRLASSHEVLLTVEEGSIGGFGSHVAQFMALDGLLDGKLKWRPLVLPDRYIDHGSPADQLAEAGLTPSHIAATVFNVLGQAREALAIMTVPNA</sequence>